<feature type="chain" id="PRO_0000455362" description="Prenyltransferase penI">
    <location>
        <begin position="1"/>
        <end position="459"/>
    </location>
</feature>
<feature type="binding site" evidence="2">
    <location>
        <begin position="107"/>
        <end position="108"/>
    </location>
    <ligand>
        <name>L-tryptophan</name>
        <dbReference type="ChEBI" id="CHEBI:57912"/>
    </ligand>
</feature>
<feature type="binding site" evidence="2">
    <location>
        <position position="111"/>
    </location>
    <ligand>
        <name>L-tryptophan</name>
        <dbReference type="ChEBI" id="CHEBI:57912"/>
    </ligand>
</feature>
<feature type="binding site" evidence="2">
    <location>
        <position position="126"/>
    </location>
    <ligand>
        <name>substrate</name>
    </ligand>
</feature>
<feature type="binding site" evidence="2">
    <location>
        <position position="276"/>
    </location>
    <ligand>
        <name>substrate</name>
    </ligand>
</feature>
<feature type="binding site" evidence="2">
    <location>
        <position position="278"/>
    </location>
    <ligand>
        <name>substrate</name>
    </ligand>
</feature>
<feature type="binding site" evidence="2">
    <location>
        <position position="280"/>
    </location>
    <ligand>
        <name>substrate</name>
    </ligand>
</feature>
<feature type="binding site" evidence="2">
    <location>
        <position position="384"/>
    </location>
    <ligand>
        <name>substrate</name>
    </ligand>
</feature>
<reference key="1">
    <citation type="journal article" date="2015" name="J. Am. Chem. Soc.">
        <title>Tandem prenyltransferases catalyze isoprenoid elongation and complexity generation in biosynthesis of quinolone alkaloids.</title>
        <authorList>
            <person name="Zou Y."/>
            <person name="Zhan Z."/>
            <person name="Li D."/>
            <person name="Tang M."/>
            <person name="Cacho R.A."/>
            <person name="Watanabe K."/>
            <person name="Tang Y."/>
        </authorList>
    </citation>
    <scope>NUCLEOTIDE SEQUENCE [GENOMIC DNA]</scope>
    <scope>FUNCTION</scope>
    <scope>CATALYTIC ACTIVITY</scope>
    <scope>PATHWAY</scope>
    <source>
        <strain>IBT 5891 / CBS 111225</strain>
    </source>
</reference>
<reference key="2">
    <citation type="journal article" date="2017" name="Nat. Chem. Biol.">
        <title>Enzyme-catalyzed cationic epoxide rearrangements in quinolone alkaloid biosynthesis.</title>
        <authorList>
            <person name="Zou Y."/>
            <person name="Garcia-Borras M."/>
            <person name="Tang M.C."/>
            <person name="Hirayama Y."/>
            <person name="Li D.H."/>
            <person name="Li L."/>
            <person name="Watanabe K."/>
            <person name="Houk K.N."/>
            <person name="Tang Y."/>
        </authorList>
    </citation>
    <scope>FUNCTION</scope>
</reference>
<organism>
    <name type="scientific">Penicillium thymicola</name>
    <dbReference type="NCBI Taxonomy" id="293382"/>
    <lineage>
        <taxon>Eukaryota</taxon>
        <taxon>Fungi</taxon>
        <taxon>Dikarya</taxon>
        <taxon>Ascomycota</taxon>
        <taxon>Pezizomycotina</taxon>
        <taxon>Eurotiomycetes</taxon>
        <taxon>Eurotiomycetidae</taxon>
        <taxon>Eurotiales</taxon>
        <taxon>Aspergillaceae</taxon>
        <taxon>Penicillium</taxon>
    </lineage>
</organism>
<gene>
    <name evidence="7" type="primary">penI</name>
</gene>
<sequence length="459" mass="51027">MASLIGGSAIQHLAQDIDTNKINHKAKANGPNLAPKSRALDMVSKLEPSRGPVHEHWWDLTSPQLASMLEEAGYPVGRQLEILLFYNHTIPEADSSRNWQSLLPVTVVPLEYSWKWDTACESPEVRLTIEAFGDLSGTRADPLNQAAAIELLHRTKGVLPDLNQTWINHFCSTLFDEDKDKYMEEAQSGTGMRLQSTMLVAFEFGRTSTSTKTYLTPRRLGQQGFARLPEYMPAIQALGPSRALDTLMDFLHTSPEGVELTPFGLSFDNVEPTSSRLKFYFASPNTSYNSLREVLTLGCRISKANFNIEEKIRTIHSLAKALMVAPDNLPDDEHISARAQPQSLSSASDPVTSDIVKERTSLLAGYQYYFDIAPGADLPDIRFYAPIRKELINDRGVAAAVTDWMKAQGRGKFCDNYVRMLEGMAGERGLSKCHGLHSFIGCLIRRDGELDVTSYLLPG</sequence>
<evidence type="ECO:0000250" key="1">
    <source>
        <dbReference type="UniProtKB" id="C8VJQ3"/>
    </source>
</evidence>
<evidence type="ECO:0000250" key="2">
    <source>
        <dbReference type="UniProtKB" id="Q50EL0"/>
    </source>
</evidence>
<evidence type="ECO:0000250" key="3">
    <source>
        <dbReference type="UniProtKB" id="Q5AR53"/>
    </source>
</evidence>
<evidence type="ECO:0000250" key="4">
    <source>
        <dbReference type="UniProtKB" id="Q5AR54"/>
    </source>
</evidence>
<evidence type="ECO:0000269" key="5">
    <source>
    </source>
</evidence>
<evidence type="ECO:0000269" key="6">
    <source>
    </source>
</evidence>
<evidence type="ECO:0000303" key="7">
    <source>
    </source>
</evidence>
<evidence type="ECO:0000305" key="8"/>
<evidence type="ECO:0000305" key="9">
    <source>
    </source>
</evidence>
<comment type="function">
    <text evidence="1 3 4 5 6 9">Prenyltransferase; part of the gene cluster that mediates the biosynthesis of penigequinolones, potent insecticidal alkaloids that contain a highly modified 10-carbon prenyl group (PubMed:25859931). The first stage is catalyzed by the nonribosomal peptide synthetase penN that condenses anthranilic acid and O-methyl-L-tyrosine to produce 4'-methoxycyclopeptin (By similarity). 4'-methoxycyclopeptin is then converted to 4'-methoxydehydrocyclopeptin by the ketoglutarate-dependent dioxygenase penM through dehydrogenation to form a double bond between C-alpha and C-beta of the O-methyltyrosine side chain (By similarity). PenM also converts its first product methoxydehydrocyclopeptin to 4'-methoxycyclopenin (By similarity). The following conversion of 4'methoxycyclopenin into 4'-methoxyviridicatin is catalyzed by the cyclopenase penL (By similarity). 4'-methoxyviridicatin is the precursor of quinolone natural products, and is further converted to quinolinone B (Probable). The prenyltransferase penI then catalyzes the canonical Friedel-Crafts alkylation of quinolinone B with dimethylallyl cation to yield dimethylallyl quinolone, which is subjected to FAD-dependent dehydrogenation by the FAD-linked oxidoreductase penH to yield conjugated aryl diene (PubMed:25859931). The delta(3') double bond then serves as the site of the second alkylation with DMAPP catalyzed by the prenyltransferase penG to yield a carbenium ion intermediate, which can be attacked by H(2)O to yield a styrenyl quinolone containing a C3'-hydroxyprenyl chain, or undergo cyclization to yield yaequinolones J1 and J2 (PubMed:25859931). The conversion of the styrenyl quinolone into the tetrahydrofuran-containing yaequinolone C is performed by the FAD-dependent monooxygenase penE and involves epoxidation of the terminal C7'-C8' olefin, followed by epoxide ring opening initiated by the C3' hydroxyl group (PubMed:25859931). The predicted cysteine hydrolase penJ acts as an epoxide hydrolase that enhances the rate of the 5-exo-tet cyclization step, increasing the yield of yaequinolone C (PubMed:25859931, PubMed:28114276). PenF catalyzes the cationic rearrangement of the epoxide formed by penE (before ring opening to produce yaequinolone C) into yaequinolone D (PubMed:28114276). Finally, the short-chain dehydrogenase/reductase (SDR)-like reductase penD, catalyzes both the dehydration of yaequinolone D and the reduction of the resulting oxonium to yield penigequinolone (PubMed:28114276).</text>
</comment>
<comment type="catalytic activity">
    <reaction evidence="5">
        <text>quinolinone B + dimethylallyl diphosphate = peniprequinolone + diphosphate</text>
        <dbReference type="Rhea" id="RHEA:73999"/>
        <dbReference type="ChEBI" id="CHEBI:33019"/>
        <dbReference type="ChEBI" id="CHEBI:57623"/>
        <dbReference type="ChEBI" id="CHEBI:181572"/>
        <dbReference type="ChEBI" id="CHEBI:182576"/>
    </reaction>
    <physiologicalReaction direction="left-to-right" evidence="5">
        <dbReference type="Rhea" id="RHEA:74000"/>
    </physiologicalReaction>
</comment>
<comment type="pathway">
    <text evidence="5">Secondary metabolite biosynthesis.</text>
</comment>
<comment type="pathway">
    <text evidence="5">Alkaloid biosynthesis.</text>
</comment>
<comment type="pathway">
    <text evidence="5">Mycotoxin biosynthesis.</text>
</comment>
<comment type="similarity">
    <text evidence="8">Belongs to the tryptophan dimethylallyltransferase family.</text>
</comment>
<accession>A0A1B2CTB7</accession>
<protein>
    <recommendedName>
        <fullName evidence="7">Prenyltransferase penI</fullName>
        <ecNumber evidence="5">2.5.1.-</ecNumber>
    </recommendedName>
    <alternativeName>
        <fullName evidence="7">Penigequinolones biosynthesis cluster protein I</fullName>
    </alternativeName>
</protein>
<name>PENI_PENTH</name>
<dbReference type="EC" id="2.5.1.-" evidence="5"/>
<dbReference type="EMBL" id="KX528209">
    <property type="protein sequence ID" value="ANY57887.1"/>
    <property type="molecule type" value="Genomic_DNA"/>
</dbReference>
<dbReference type="SMR" id="A0A1B2CTB7"/>
<dbReference type="BioCyc" id="MetaCyc:MONOMER-124187"/>
<dbReference type="GO" id="GO:0004659">
    <property type="term" value="F:prenyltransferase activity"/>
    <property type="evidence" value="ECO:0007669"/>
    <property type="project" value="TreeGrafter"/>
</dbReference>
<dbReference type="GO" id="GO:0009820">
    <property type="term" value="P:alkaloid metabolic process"/>
    <property type="evidence" value="ECO:0007669"/>
    <property type="project" value="InterPro"/>
</dbReference>
<dbReference type="CDD" id="cd13929">
    <property type="entry name" value="PT-DMATS_CymD"/>
    <property type="match status" value="1"/>
</dbReference>
<dbReference type="InterPro" id="IPR033964">
    <property type="entry name" value="Aro_prenylTrfase"/>
</dbReference>
<dbReference type="InterPro" id="IPR017795">
    <property type="entry name" value="Aro_prenylTrfase_DMATS"/>
</dbReference>
<dbReference type="InterPro" id="IPR012148">
    <property type="entry name" value="DMATS-type_fun"/>
</dbReference>
<dbReference type="NCBIfam" id="TIGR03429">
    <property type="entry name" value="arom_pren_DMATS"/>
    <property type="match status" value="1"/>
</dbReference>
<dbReference type="PANTHER" id="PTHR40627">
    <property type="entry name" value="INDOLE PRENYLTRANSFERASE TDIB-RELATED"/>
    <property type="match status" value="1"/>
</dbReference>
<dbReference type="PANTHER" id="PTHR40627:SF4">
    <property type="entry name" value="PRENYLTRANSFERASE ASQH1-RELATED"/>
    <property type="match status" value="1"/>
</dbReference>
<dbReference type="Pfam" id="PF11991">
    <property type="entry name" value="Trp_DMAT"/>
    <property type="match status" value="1"/>
</dbReference>
<dbReference type="PIRSF" id="PIRSF000509">
    <property type="entry name" value="Trp_DMAT"/>
    <property type="match status" value="1"/>
</dbReference>
<dbReference type="SFLD" id="SFLDS00036">
    <property type="entry name" value="Aromatic_Prenyltransferase"/>
    <property type="match status" value="1"/>
</dbReference>
<dbReference type="SFLD" id="SFLDG01162">
    <property type="entry name" value="I"/>
    <property type="match status" value="1"/>
</dbReference>
<keyword id="KW-0808">Transferase</keyword>
<proteinExistence type="evidence at protein level"/>